<comment type="similarity">
    <text evidence="1">Belongs to the bacterial ribosomal protein bL32 family.</text>
</comment>
<evidence type="ECO:0000255" key="1">
    <source>
        <dbReference type="HAMAP-Rule" id="MF_00340"/>
    </source>
</evidence>
<evidence type="ECO:0000256" key="2">
    <source>
        <dbReference type="SAM" id="MobiDB-lite"/>
    </source>
</evidence>
<evidence type="ECO:0000305" key="3"/>
<dbReference type="EMBL" id="AP008231">
    <property type="protein sequence ID" value="BAD78737.1"/>
    <property type="molecule type" value="Genomic_DNA"/>
</dbReference>
<dbReference type="RefSeq" id="WP_011242859.1">
    <property type="nucleotide sequence ID" value="NZ_CP085785.1"/>
</dbReference>
<dbReference type="SMR" id="Q5N4N2"/>
<dbReference type="GeneID" id="72429850"/>
<dbReference type="KEGG" id="syc:syc0547_d"/>
<dbReference type="eggNOG" id="COG0333">
    <property type="taxonomic scope" value="Bacteria"/>
</dbReference>
<dbReference type="Proteomes" id="UP000001175">
    <property type="component" value="Chromosome"/>
</dbReference>
<dbReference type="GO" id="GO:0015934">
    <property type="term" value="C:large ribosomal subunit"/>
    <property type="evidence" value="ECO:0007669"/>
    <property type="project" value="InterPro"/>
</dbReference>
<dbReference type="GO" id="GO:0003735">
    <property type="term" value="F:structural constituent of ribosome"/>
    <property type="evidence" value="ECO:0007669"/>
    <property type="project" value="InterPro"/>
</dbReference>
<dbReference type="GO" id="GO:0006412">
    <property type="term" value="P:translation"/>
    <property type="evidence" value="ECO:0007669"/>
    <property type="project" value="UniProtKB-UniRule"/>
</dbReference>
<dbReference type="HAMAP" id="MF_00340">
    <property type="entry name" value="Ribosomal_bL32"/>
    <property type="match status" value="1"/>
</dbReference>
<dbReference type="InterPro" id="IPR002677">
    <property type="entry name" value="Ribosomal_bL32"/>
</dbReference>
<dbReference type="InterPro" id="IPR044958">
    <property type="entry name" value="Ribosomal_bL32_plant/cyanobact"/>
</dbReference>
<dbReference type="InterPro" id="IPR011332">
    <property type="entry name" value="Ribosomal_zn-bd"/>
</dbReference>
<dbReference type="NCBIfam" id="TIGR01031">
    <property type="entry name" value="rpmF_bact"/>
    <property type="match status" value="1"/>
</dbReference>
<dbReference type="PANTHER" id="PTHR36083">
    <property type="entry name" value="50S RIBOSOMAL PROTEIN L32, CHLOROPLASTIC"/>
    <property type="match status" value="1"/>
</dbReference>
<dbReference type="PANTHER" id="PTHR36083:SF1">
    <property type="entry name" value="LARGE RIBOSOMAL SUBUNIT PROTEIN BL32C"/>
    <property type="match status" value="1"/>
</dbReference>
<dbReference type="Pfam" id="PF01783">
    <property type="entry name" value="Ribosomal_L32p"/>
    <property type="match status" value="1"/>
</dbReference>
<dbReference type="SUPFAM" id="SSF57829">
    <property type="entry name" value="Zn-binding ribosomal proteins"/>
    <property type="match status" value="1"/>
</dbReference>
<organism>
    <name type="scientific">Synechococcus sp. (strain ATCC 27144 / PCC 6301 / SAUG 1402/1)</name>
    <name type="common">Anacystis nidulans</name>
    <dbReference type="NCBI Taxonomy" id="269084"/>
    <lineage>
        <taxon>Bacteria</taxon>
        <taxon>Bacillati</taxon>
        <taxon>Cyanobacteriota</taxon>
        <taxon>Cyanophyceae</taxon>
        <taxon>Synechococcales</taxon>
        <taxon>Synechococcaceae</taxon>
        <taxon>Synechococcus</taxon>
    </lineage>
</organism>
<gene>
    <name evidence="1" type="primary">rpmF</name>
    <name evidence="1" type="synonym">rpl32</name>
    <name type="ordered locus">syc0547_d</name>
</gene>
<proteinExistence type="inferred from homology"/>
<accession>Q5N4N2</accession>
<keyword id="KW-0687">Ribonucleoprotein</keyword>
<keyword id="KW-0689">Ribosomal protein</keyword>
<name>RL32_SYNP6</name>
<feature type="chain" id="PRO_0000225773" description="Large ribosomal subunit protein bL32">
    <location>
        <begin position="1"/>
        <end position="58"/>
    </location>
</feature>
<feature type="region of interest" description="Disordered" evidence="2">
    <location>
        <begin position="1"/>
        <end position="24"/>
    </location>
</feature>
<protein>
    <recommendedName>
        <fullName evidence="1">Large ribosomal subunit protein bL32</fullName>
    </recommendedName>
    <alternativeName>
        <fullName evidence="3">50S ribosomal protein L32</fullName>
    </alternativeName>
</protein>
<sequence>MAVPKKKTSKSKRDKRKATWKRKAALQAQRALSLGKSVLTGRAKGFVYPAQDEEETEE</sequence>
<reference key="1">
    <citation type="journal article" date="2007" name="Photosyn. Res.">
        <title>Complete nucleotide sequence of the freshwater unicellular cyanobacterium Synechococcus elongatus PCC 6301 chromosome: gene content and organization.</title>
        <authorList>
            <person name="Sugita C."/>
            <person name="Ogata K."/>
            <person name="Shikata M."/>
            <person name="Jikuya H."/>
            <person name="Takano J."/>
            <person name="Furumichi M."/>
            <person name="Kanehisa M."/>
            <person name="Omata T."/>
            <person name="Sugiura M."/>
            <person name="Sugita M."/>
        </authorList>
    </citation>
    <scope>NUCLEOTIDE SEQUENCE [LARGE SCALE GENOMIC DNA]</scope>
    <source>
        <strain>ATCC 27144 / PCC 6301 / SAUG 1402/1</strain>
    </source>
</reference>